<evidence type="ECO:0000255" key="1">
    <source>
        <dbReference type="HAMAP-Rule" id="MF_01102"/>
    </source>
</evidence>
<evidence type="ECO:0000305" key="2"/>
<accession>Q0HKB8</accession>
<organism>
    <name type="scientific">Shewanella sp. (strain MR-4)</name>
    <dbReference type="NCBI Taxonomy" id="60480"/>
    <lineage>
        <taxon>Bacteria</taxon>
        <taxon>Pseudomonadati</taxon>
        <taxon>Pseudomonadota</taxon>
        <taxon>Gammaproteobacteria</taxon>
        <taxon>Alteromonadales</taxon>
        <taxon>Shewanellaceae</taxon>
        <taxon>Shewanella</taxon>
    </lineage>
</organism>
<keyword id="KW-0963">Cytoplasm</keyword>
<keyword id="KW-0274">FAD</keyword>
<keyword id="KW-0285">Flavoprotein</keyword>
<keyword id="KW-0489">Methyltransferase</keyword>
<keyword id="KW-0511">Multifunctional enzyme</keyword>
<keyword id="KW-0560">Oxidoreductase</keyword>
<keyword id="KW-0949">S-adenosyl-L-methionine</keyword>
<keyword id="KW-0808">Transferase</keyword>
<keyword id="KW-0819">tRNA processing</keyword>
<dbReference type="EC" id="2.1.1.61" evidence="1"/>
<dbReference type="EC" id="1.5.-.-" evidence="1"/>
<dbReference type="EMBL" id="CP000446">
    <property type="protein sequence ID" value="ABI38499.1"/>
    <property type="status" value="ALT_INIT"/>
    <property type="molecule type" value="Genomic_DNA"/>
</dbReference>
<dbReference type="RefSeq" id="WP_041408739.1">
    <property type="nucleotide sequence ID" value="NC_008321.1"/>
</dbReference>
<dbReference type="SMR" id="Q0HKB8"/>
<dbReference type="KEGG" id="she:Shewmr4_1421"/>
<dbReference type="HOGENOM" id="CLU_022427_2_1_6"/>
<dbReference type="GO" id="GO:0005737">
    <property type="term" value="C:cytoplasm"/>
    <property type="evidence" value="ECO:0007669"/>
    <property type="project" value="UniProtKB-SubCell"/>
</dbReference>
<dbReference type="GO" id="GO:0050660">
    <property type="term" value="F:flavin adenine dinucleotide binding"/>
    <property type="evidence" value="ECO:0007669"/>
    <property type="project" value="UniProtKB-UniRule"/>
</dbReference>
<dbReference type="GO" id="GO:0016645">
    <property type="term" value="F:oxidoreductase activity, acting on the CH-NH group of donors"/>
    <property type="evidence" value="ECO:0007669"/>
    <property type="project" value="InterPro"/>
</dbReference>
<dbReference type="GO" id="GO:0004808">
    <property type="term" value="F:tRNA (5-methylaminomethyl-2-thiouridylate)(34)-methyltransferase activity"/>
    <property type="evidence" value="ECO:0007669"/>
    <property type="project" value="UniProtKB-EC"/>
</dbReference>
<dbReference type="GO" id="GO:0032259">
    <property type="term" value="P:methylation"/>
    <property type="evidence" value="ECO:0007669"/>
    <property type="project" value="UniProtKB-KW"/>
</dbReference>
<dbReference type="GO" id="GO:0002098">
    <property type="term" value="P:tRNA wobble uridine modification"/>
    <property type="evidence" value="ECO:0007669"/>
    <property type="project" value="TreeGrafter"/>
</dbReference>
<dbReference type="Gene3D" id="3.30.9.10">
    <property type="entry name" value="D-Amino Acid Oxidase, subunit A, domain 2"/>
    <property type="match status" value="1"/>
</dbReference>
<dbReference type="Gene3D" id="3.50.50.60">
    <property type="entry name" value="FAD/NAD(P)-binding domain"/>
    <property type="match status" value="1"/>
</dbReference>
<dbReference type="Gene3D" id="3.40.50.150">
    <property type="entry name" value="Vaccinia Virus protein VP39"/>
    <property type="match status" value="1"/>
</dbReference>
<dbReference type="HAMAP" id="MF_01102">
    <property type="entry name" value="MnmC"/>
    <property type="match status" value="1"/>
</dbReference>
<dbReference type="InterPro" id="IPR006076">
    <property type="entry name" value="FAD-dep_OxRdtase"/>
</dbReference>
<dbReference type="InterPro" id="IPR036188">
    <property type="entry name" value="FAD/NAD-bd_sf"/>
</dbReference>
<dbReference type="InterPro" id="IPR029063">
    <property type="entry name" value="SAM-dependent_MTases_sf"/>
</dbReference>
<dbReference type="InterPro" id="IPR023032">
    <property type="entry name" value="tRNA_MAMT_biosynth_bifunc_MnmC"/>
</dbReference>
<dbReference type="InterPro" id="IPR017610">
    <property type="entry name" value="tRNA_S-uridine_synth_MnmC_C"/>
</dbReference>
<dbReference type="NCBIfam" id="TIGR03197">
    <property type="entry name" value="MnmC_Cterm"/>
    <property type="match status" value="1"/>
</dbReference>
<dbReference type="PANTHER" id="PTHR13847">
    <property type="entry name" value="SARCOSINE DEHYDROGENASE-RELATED"/>
    <property type="match status" value="1"/>
</dbReference>
<dbReference type="PANTHER" id="PTHR13847:SF283">
    <property type="entry name" value="TRNA 5-METHYLAMINOMETHYL-2-THIOURIDINE BIOSYNTHESIS BIFUNCTIONAL PROTEIN MNMC"/>
    <property type="match status" value="1"/>
</dbReference>
<dbReference type="Pfam" id="PF01266">
    <property type="entry name" value="DAO"/>
    <property type="match status" value="1"/>
</dbReference>
<dbReference type="SUPFAM" id="SSF51905">
    <property type="entry name" value="FAD/NAD(P)-binding domain"/>
    <property type="match status" value="1"/>
</dbReference>
<sequence>MTAKPQKSCQFKRDYPQLINLYPPCALTTAQSLDNLTRLRLSRLTTQSTQPIQGLCVMGQWGLGDGLELLSLLQHWQTQTQTQGNTRLLVKVFEPNPINDYELKLLWDQSQSLISKSHLQPIANAILKAKPARIIGCQRLIFDDGRITVDLHFGDLHTALSQLPHSADHPIQQWLVLPHLAAQLNGKQVWQMARLSTDDAQLIGVNLAETLQQLAHKSGFSTLNVSQDALNGDASDALQSHIITDEILLHERKLLRQQADTAQAFTPKPTALATKDHPIAIVGGGLASANLMLSLAERGQSSTLFCKDNELGQGASGNRQGAIYPLLTPENDELSRFFQQAFLFSRRRIEALSHASMMETEAAPTITAISHDFCGVLQTGHDERSQQRLDKIIQSQDWPAEIAYAVDANEANEIAQIGIDKAGFFYPLGGWVCPFEYAKAAVDKASQLANVQCHFNTEITEIECDAKAWYLHSQGQRFGPFRQLVLANGAQLTQFSASERLQISPFRGQVSHVPAQFKLSQLATVLCANGYLTPSHQGLHCLGASYVKAAEHLDFCPQEQWENLGKMQESYPNQAWVDDIDISDNSARVGVRMVTRDHFPMMGCAPDVAEILARYEQHQLNQQQAEQSKHYWQTTPAPILDGLYILGGLGSRGLSSGPLAAECLAAQLTGEPLPLDWPTLNKLNPNRMWLRKLLKGKAL</sequence>
<reference key="1">
    <citation type="submission" date="2006-08" db="EMBL/GenBank/DDBJ databases">
        <title>Complete sequence of Shewanella sp. MR-4.</title>
        <authorList>
            <consortium name="US DOE Joint Genome Institute"/>
            <person name="Copeland A."/>
            <person name="Lucas S."/>
            <person name="Lapidus A."/>
            <person name="Barry K."/>
            <person name="Detter J.C."/>
            <person name="Glavina del Rio T."/>
            <person name="Hammon N."/>
            <person name="Israni S."/>
            <person name="Dalin E."/>
            <person name="Tice H."/>
            <person name="Pitluck S."/>
            <person name="Kiss H."/>
            <person name="Brettin T."/>
            <person name="Bruce D."/>
            <person name="Han C."/>
            <person name="Tapia R."/>
            <person name="Gilna P."/>
            <person name="Schmutz J."/>
            <person name="Larimer F."/>
            <person name="Land M."/>
            <person name="Hauser L."/>
            <person name="Kyrpides N."/>
            <person name="Mikhailova N."/>
            <person name="Nealson K."/>
            <person name="Konstantinidis K."/>
            <person name="Klappenbach J."/>
            <person name="Tiedje J."/>
            <person name="Richardson P."/>
        </authorList>
    </citation>
    <scope>NUCLEOTIDE SEQUENCE [LARGE SCALE GENOMIC DNA]</scope>
    <source>
        <strain>MR-4</strain>
    </source>
</reference>
<gene>
    <name evidence="1" type="primary">mnmC</name>
    <name type="ordered locus">Shewmr4_1421</name>
</gene>
<proteinExistence type="inferred from homology"/>
<comment type="function">
    <text evidence="1">Catalyzes the last two steps in the biosynthesis of 5-methylaminomethyl-2-thiouridine (mnm(5)s(2)U) at the wobble position (U34) in tRNA. Catalyzes the FAD-dependent demodification of cmnm(5)s(2)U34 to nm(5)s(2)U34, followed by the transfer of a methyl group from S-adenosyl-L-methionine to nm(5)s(2)U34, to form mnm(5)s(2)U34.</text>
</comment>
<comment type="catalytic activity">
    <reaction evidence="1">
        <text>5-aminomethyl-2-thiouridine(34) in tRNA + S-adenosyl-L-methionine = 5-methylaminomethyl-2-thiouridine(34) in tRNA + S-adenosyl-L-homocysteine + H(+)</text>
        <dbReference type="Rhea" id="RHEA:19569"/>
        <dbReference type="Rhea" id="RHEA-COMP:10195"/>
        <dbReference type="Rhea" id="RHEA-COMP:10197"/>
        <dbReference type="ChEBI" id="CHEBI:15378"/>
        <dbReference type="ChEBI" id="CHEBI:57856"/>
        <dbReference type="ChEBI" id="CHEBI:59789"/>
        <dbReference type="ChEBI" id="CHEBI:74454"/>
        <dbReference type="ChEBI" id="CHEBI:74455"/>
        <dbReference type="EC" id="2.1.1.61"/>
    </reaction>
</comment>
<comment type="cofactor">
    <cofactor evidence="1">
        <name>FAD</name>
        <dbReference type="ChEBI" id="CHEBI:57692"/>
    </cofactor>
</comment>
<comment type="subcellular location">
    <subcellularLocation>
        <location evidence="1">Cytoplasm</location>
    </subcellularLocation>
</comment>
<comment type="similarity">
    <text evidence="1">In the N-terminal section; belongs to the methyltransferase superfamily. tRNA (mnm(5)s(2)U34)-methyltransferase family.</text>
</comment>
<comment type="similarity">
    <text evidence="1">In the C-terminal section; belongs to the DAO family.</text>
</comment>
<comment type="sequence caution" evidence="2">
    <conflict type="erroneous initiation">
        <sequence resource="EMBL-CDS" id="ABI38499"/>
    </conflict>
</comment>
<protein>
    <recommendedName>
        <fullName evidence="1">tRNA 5-methylaminomethyl-2-thiouridine biosynthesis bifunctional protein MnmC</fullName>
        <shortName evidence="1">tRNA mnm(5)s(2)U biosynthesis bifunctional protein</shortName>
    </recommendedName>
    <domain>
        <recommendedName>
            <fullName evidence="1">tRNA (mnm(5)s(2)U34)-methyltransferase</fullName>
            <ecNumber evidence="1">2.1.1.61</ecNumber>
        </recommendedName>
    </domain>
    <domain>
        <recommendedName>
            <fullName evidence="1">FAD-dependent cmnm(5)s(2)U34 oxidoreductase</fullName>
            <ecNumber evidence="1">1.5.-.-</ecNumber>
        </recommendedName>
    </domain>
</protein>
<name>MNMC_SHESM</name>
<feature type="chain" id="PRO_0000348035" description="tRNA 5-methylaminomethyl-2-thiouridine biosynthesis bifunctional protein MnmC">
    <location>
        <begin position="1"/>
        <end position="699"/>
    </location>
</feature>
<feature type="region of interest" description="tRNA (mnm(5)s(2)U34)-methyltransferase">
    <location>
        <begin position="1"/>
        <end position="260"/>
    </location>
</feature>
<feature type="region of interest" description="FAD-dependent cmnm(5)s(2)U34 oxidoreductase">
    <location>
        <begin position="282"/>
        <end position="699"/>
    </location>
</feature>